<name>ANP2_ANALU</name>
<accession>P12417</accession>
<sequence length="88" mass="9430">MKSAILTGLLFVLLCVDHMSSASQSVVATQLIPINTALTPIMMKGQVVNPAGIPFAEMSQIVGKQVNRAVAKDETLMPNMVKTYRAAK</sequence>
<protein>
    <recommendedName>
        <fullName>Type-3 ice-structuring protein 1.5</fullName>
    </recommendedName>
    <alternativeName>
        <fullName>Antifreeze protein type III</fullName>
    </alternativeName>
    <alternativeName>
        <fullName>ISP 3</fullName>
    </alternativeName>
</protein>
<evidence type="ECO:0000250" key="1"/>
<evidence type="ECO:0000255" key="2">
    <source>
        <dbReference type="PROSITE-ProRule" id="PRU00021"/>
    </source>
</evidence>
<evidence type="ECO:0000305" key="3"/>
<feature type="signal peptide">
    <location>
        <begin position="1"/>
        <end position="23"/>
    </location>
</feature>
<feature type="chain" id="PRO_0000001697" description="Type-3 ice-structuring protein 1.5">
    <location>
        <begin position="24"/>
        <end position="88"/>
    </location>
</feature>
<feature type="domain" description="AFP-like" evidence="2">
    <location>
        <begin position="25"/>
        <end position="84"/>
    </location>
</feature>
<feature type="site" description="Important for ice-binding" evidence="1">
    <location>
        <position position="30"/>
    </location>
</feature>
<feature type="site" description="Important for ice-binding" evidence="1">
    <location>
        <position position="35"/>
    </location>
</feature>
<feature type="site" description="Important for ice-binding" evidence="1">
    <location>
        <position position="39"/>
    </location>
</feature>
<feature type="site" description="Important for ice-binding" evidence="1">
    <location>
        <position position="65"/>
    </location>
</feature>
<feature type="sequence conflict" description="In Ref. 1; AAA74891." evidence="3" ref="1">
    <original>Q</original>
    <variation>QQ</variation>
    <location>
        <position position="24"/>
    </location>
</feature>
<comment type="function">
    <text evidence="1">Contributes to protect fish blood from freezing at subzero sea water temperatures. Lowers the blood freezing point. Binds to nascent ice crystals and prevents further growth (By similarity).</text>
</comment>
<comment type="subcellular location">
    <subcellularLocation>
        <location evidence="1">Secreted</location>
    </subcellularLocation>
</comment>
<comment type="similarity">
    <text evidence="3">Belongs to the type-III AFP family.</text>
</comment>
<reference key="1">
    <citation type="journal article" date="1988" name="Mol. Cell. Biol.">
        <title>Wolffish antifreeze protein genes are primarily organized as tandem repeats that each contain two genes in inverted orientation.</title>
        <authorList>
            <person name="Scott G.K."/>
            <person name="Hayes P.H."/>
            <person name="Fletcher G.L."/>
            <person name="Davies P.L."/>
        </authorList>
    </citation>
    <scope>NUCLEOTIDE SEQUENCE [GENOMIC DNA]</scope>
</reference>
<proteinExistence type="inferred from homology"/>
<dbReference type="EMBL" id="M22125">
    <property type="protein sequence ID" value="AAA74891.1"/>
    <property type="molecule type" value="Genomic_DNA"/>
</dbReference>
<dbReference type="SMR" id="P12417"/>
<dbReference type="GO" id="GO:0005576">
    <property type="term" value="C:extracellular region"/>
    <property type="evidence" value="ECO:0007669"/>
    <property type="project" value="UniProtKB-SubCell"/>
</dbReference>
<dbReference type="CDD" id="cd11617">
    <property type="entry name" value="Antifreeze_III"/>
    <property type="match status" value="1"/>
</dbReference>
<dbReference type="Gene3D" id="3.90.1210.10">
    <property type="entry name" value="Antifreeze-like/N-acetylneuraminic acid synthase C-terminal domain"/>
    <property type="match status" value="1"/>
</dbReference>
<dbReference type="InterPro" id="IPR006190">
    <property type="entry name" value="AFP_Neu5c_C"/>
</dbReference>
<dbReference type="InterPro" id="IPR036732">
    <property type="entry name" value="AFP_Neu5c_C_sf"/>
</dbReference>
<dbReference type="InterPro" id="IPR006013">
    <property type="entry name" value="Antifreeze_III"/>
</dbReference>
<dbReference type="InterPro" id="IPR013974">
    <property type="entry name" value="SAF"/>
</dbReference>
<dbReference type="Pfam" id="PF08666">
    <property type="entry name" value="SAF"/>
    <property type="match status" value="1"/>
</dbReference>
<dbReference type="PRINTS" id="PR00357">
    <property type="entry name" value="ANTIFREEZIII"/>
</dbReference>
<dbReference type="SMART" id="SM00858">
    <property type="entry name" value="SAF"/>
    <property type="match status" value="1"/>
</dbReference>
<dbReference type="SUPFAM" id="SSF51269">
    <property type="entry name" value="AFP III-like domain"/>
    <property type="match status" value="1"/>
</dbReference>
<dbReference type="PROSITE" id="PS50844">
    <property type="entry name" value="AFP_LIKE"/>
    <property type="match status" value="1"/>
</dbReference>
<keyword id="KW-0047">Antifreeze protein</keyword>
<keyword id="KW-0964">Secreted</keyword>
<keyword id="KW-0732">Signal</keyword>
<organism>
    <name type="scientific">Anarhichas lupus</name>
    <name type="common">Atlantic wolffish</name>
    <dbReference type="NCBI Taxonomy" id="8204"/>
    <lineage>
        <taxon>Eukaryota</taxon>
        <taxon>Metazoa</taxon>
        <taxon>Chordata</taxon>
        <taxon>Craniata</taxon>
        <taxon>Vertebrata</taxon>
        <taxon>Euteleostomi</taxon>
        <taxon>Actinopterygii</taxon>
        <taxon>Neopterygii</taxon>
        <taxon>Teleostei</taxon>
        <taxon>Neoteleostei</taxon>
        <taxon>Acanthomorphata</taxon>
        <taxon>Eupercaria</taxon>
        <taxon>Perciformes</taxon>
        <taxon>Cottioidei</taxon>
        <taxon>Zoarcales</taxon>
        <taxon>Anarhichadidae</taxon>
        <taxon>Anarhichas</taxon>
    </lineage>
</organism>